<organism>
    <name type="scientific">Alcanivorax borkumensis (strain ATCC 700651 / DSM 11573 / NCIMB 13689 / SK2)</name>
    <dbReference type="NCBI Taxonomy" id="393595"/>
    <lineage>
        <taxon>Bacteria</taxon>
        <taxon>Pseudomonadati</taxon>
        <taxon>Pseudomonadota</taxon>
        <taxon>Gammaproteobacteria</taxon>
        <taxon>Oceanospirillales</taxon>
        <taxon>Alcanivoracaceae</taxon>
        <taxon>Alcanivorax</taxon>
    </lineage>
</organism>
<proteinExistence type="inferred from homology"/>
<comment type="function">
    <text evidence="1">Forms part of the ribosomal stalk which helps the ribosome interact with GTP-bound translation factors. Is thus essential for accurate translation.</text>
</comment>
<comment type="subunit">
    <text evidence="1">Homodimer. Part of the ribosomal stalk of the 50S ribosomal subunit. Forms a multimeric L10(L12)X complex, where L10 forms an elongated spine to which 2 to 4 L12 dimers bind in a sequential fashion. Binds GTP-bound translation factors.</text>
</comment>
<comment type="similarity">
    <text evidence="1">Belongs to the bacterial ribosomal protein bL12 family.</text>
</comment>
<dbReference type="EMBL" id="AM286690">
    <property type="protein sequence ID" value="CAL15825.1"/>
    <property type="molecule type" value="Genomic_DNA"/>
</dbReference>
<dbReference type="RefSeq" id="WP_011587672.1">
    <property type="nucleotide sequence ID" value="NC_008260.1"/>
</dbReference>
<dbReference type="SMR" id="Q0VSM3"/>
<dbReference type="STRING" id="393595.ABO_0377"/>
<dbReference type="KEGG" id="abo:ABO_0377"/>
<dbReference type="eggNOG" id="COG0222">
    <property type="taxonomic scope" value="Bacteria"/>
</dbReference>
<dbReference type="HOGENOM" id="CLU_086499_3_2_6"/>
<dbReference type="OrthoDB" id="9811748at2"/>
<dbReference type="Proteomes" id="UP000008871">
    <property type="component" value="Chromosome"/>
</dbReference>
<dbReference type="GO" id="GO:0022625">
    <property type="term" value="C:cytosolic large ribosomal subunit"/>
    <property type="evidence" value="ECO:0007669"/>
    <property type="project" value="TreeGrafter"/>
</dbReference>
<dbReference type="GO" id="GO:0003729">
    <property type="term" value="F:mRNA binding"/>
    <property type="evidence" value="ECO:0007669"/>
    <property type="project" value="TreeGrafter"/>
</dbReference>
<dbReference type="GO" id="GO:0003735">
    <property type="term" value="F:structural constituent of ribosome"/>
    <property type="evidence" value="ECO:0007669"/>
    <property type="project" value="InterPro"/>
</dbReference>
<dbReference type="GO" id="GO:0006412">
    <property type="term" value="P:translation"/>
    <property type="evidence" value="ECO:0007669"/>
    <property type="project" value="UniProtKB-UniRule"/>
</dbReference>
<dbReference type="CDD" id="cd00387">
    <property type="entry name" value="Ribosomal_L7_L12"/>
    <property type="match status" value="1"/>
</dbReference>
<dbReference type="FunFam" id="3.30.1390.10:FF:000001">
    <property type="entry name" value="50S ribosomal protein L7/L12"/>
    <property type="match status" value="1"/>
</dbReference>
<dbReference type="Gene3D" id="3.30.1390.10">
    <property type="match status" value="1"/>
</dbReference>
<dbReference type="Gene3D" id="1.20.5.710">
    <property type="entry name" value="Single helix bin"/>
    <property type="match status" value="1"/>
</dbReference>
<dbReference type="HAMAP" id="MF_00368">
    <property type="entry name" value="Ribosomal_bL12"/>
    <property type="match status" value="1"/>
</dbReference>
<dbReference type="InterPro" id="IPR000206">
    <property type="entry name" value="Ribosomal_bL12"/>
</dbReference>
<dbReference type="InterPro" id="IPR013823">
    <property type="entry name" value="Ribosomal_bL12_C"/>
</dbReference>
<dbReference type="InterPro" id="IPR014719">
    <property type="entry name" value="Ribosomal_bL12_C/ClpS-like"/>
</dbReference>
<dbReference type="InterPro" id="IPR008932">
    <property type="entry name" value="Ribosomal_bL12_oligo"/>
</dbReference>
<dbReference type="InterPro" id="IPR036235">
    <property type="entry name" value="Ribosomal_bL12_oligo_N_sf"/>
</dbReference>
<dbReference type="NCBIfam" id="TIGR00855">
    <property type="entry name" value="L12"/>
    <property type="match status" value="1"/>
</dbReference>
<dbReference type="PANTHER" id="PTHR45987">
    <property type="entry name" value="39S RIBOSOMAL PROTEIN L12"/>
    <property type="match status" value="1"/>
</dbReference>
<dbReference type="PANTHER" id="PTHR45987:SF4">
    <property type="entry name" value="LARGE RIBOSOMAL SUBUNIT PROTEIN BL12M"/>
    <property type="match status" value="1"/>
</dbReference>
<dbReference type="Pfam" id="PF00542">
    <property type="entry name" value="Ribosomal_L12"/>
    <property type="match status" value="1"/>
</dbReference>
<dbReference type="Pfam" id="PF16320">
    <property type="entry name" value="Ribosomal_L12_N"/>
    <property type="match status" value="1"/>
</dbReference>
<dbReference type="SUPFAM" id="SSF54736">
    <property type="entry name" value="ClpS-like"/>
    <property type="match status" value="1"/>
</dbReference>
<dbReference type="SUPFAM" id="SSF48300">
    <property type="entry name" value="Ribosomal protein L7/12, oligomerisation (N-terminal) domain"/>
    <property type="match status" value="1"/>
</dbReference>
<keyword id="KW-1185">Reference proteome</keyword>
<keyword id="KW-0687">Ribonucleoprotein</keyword>
<keyword id="KW-0689">Ribosomal protein</keyword>
<accession>Q0VSM3</accession>
<feature type="chain" id="PRO_1000006954" description="Large ribosomal subunit protein bL12">
    <location>
        <begin position="1"/>
        <end position="125"/>
    </location>
</feature>
<feature type="region of interest" description="Disordered" evidence="2">
    <location>
        <begin position="96"/>
        <end position="125"/>
    </location>
</feature>
<feature type="compositionally biased region" description="Basic and acidic residues" evidence="2">
    <location>
        <begin position="102"/>
        <end position="117"/>
    </location>
</feature>
<name>RL7_ALCBS</name>
<sequence>MAVSKEDILGAIADMSVMDLVELIEAMEEKFGVTAAAAVAAAPAAAGGDAAAAEEQTEFDVVLSSFGDKKVGVIKAVREVTGLGLKEAKELVESAPAPVKEGATKDEAEEIKKKIEEAGGTAELK</sequence>
<evidence type="ECO:0000255" key="1">
    <source>
        <dbReference type="HAMAP-Rule" id="MF_00368"/>
    </source>
</evidence>
<evidence type="ECO:0000256" key="2">
    <source>
        <dbReference type="SAM" id="MobiDB-lite"/>
    </source>
</evidence>
<evidence type="ECO:0000305" key="3"/>
<reference key="1">
    <citation type="journal article" date="2006" name="Nat. Biotechnol.">
        <title>Genome sequence of the ubiquitous hydrocarbon-degrading marine bacterium Alcanivorax borkumensis.</title>
        <authorList>
            <person name="Schneiker S."/>
            <person name="Martins dos Santos V.A.P."/>
            <person name="Bartels D."/>
            <person name="Bekel T."/>
            <person name="Brecht M."/>
            <person name="Buhrmester J."/>
            <person name="Chernikova T.N."/>
            <person name="Denaro R."/>
            <person name="Ferrer M."/>
            <person name="Gertler C."/>
            <person name="Goesmann A."/>
            <person name="Golyshina O.V."/>
            <person name="Kaminski F."/>
            <person name="Khachane A.N."/>
            <person name="Lang S."/>
            <person name="Linke B."/>
            <person name="McHardy A.C."/>
            <person name="Meyer F."/>
            <person name="Nechitaylo T."/>
            <person name="Puehler A."/>
            <person name="Regenhardt D."/>
            <person name="Rupp O."/>
            <person name="Sabirova J.S."/>
            <person name="Selbitschka W."/>
            <person name="Yakimov M.M."/>
            <person name="Timmis K.N."/>
            <person name="Vorhoelter F.-J."/>
            <person name="Weidner S."/>
            <person name="Kaiser O."/>
            <person name="Golyshin P.N."/>
        </authorList>
    </citation>
    <scope>NUCLEOTIDE SEQUENCE [LARGE SCALE GENOMIC DNA]</scope>
    <source>
        <strain>ATCC 700651 / DSM 11573 / NCIMB 13689 / SK2</strain>
    </source>
</reference>
<gene>
    <name evidence="1" type="primary">rplL</name>
    <name type="ordered locus">ABO_0377</name>
</gene>
<protein>
    <recommendedName>
        <fullName evidence="1">Large ribosomal subunit protein bL12</fullName>
    </recommendedName>
    <alternativeName>
        <fullName evidence="3">50S ribosomal protein L7/L12</fullName>
    </alternativeName>
</protein>